<feature type="chain" id="PRO_0000342729" description="D-fructose 1,6-bisphosphatase class 2/sedoheptulose 1,7-bisphosphatase">
    <location>
        <begin position="1"/>
        <end position="334"/>
    </location>
</feature>
<feature type="binding site" evidence="1">
    <location>
        <position position="33"/>
    </location>
    <ligand>
        <name>Mn(2+)</name>
        <dbReference type="ChEBI" id="CHEBI:29035"/>
        <label>1</label>
    </ligand>
</feature>
<feature type="binding site" evidence="1">
    <location>
        <position position="57"/>
    </location>
    <ligand>
        <name>Mn(2+)</name>
        <dbReference type="ChEBI" id="CHEBI:29035"/>
        <label>1</label>
    </ligand>
</feature>
<feature type="binding site" evidence="1">
    <location>
        <position position="85"/>
    </location>
    <ligand>
        <name>Mn(2+)</name>
        <dbReference type="ChEBI" id="CHEBI:29035"/>
        <label>2</label>
    </ligand>
</feature>
<feature type="binding site" evidence="1">
    <location>
        <begin position="88"/>
        <end position="90"/>
    </location>
    <ligand>
        <name>substrate</name>
    </ligand>
</feature>
<feature type="binding site" evidence="1">
    <location>
        <position position="88"/>
    </location>
    <ligand>
        <name>Mn(2+)</name>
        <dbReference type="ChEBI" id="CHEBI:29035"/>
        <label>2</label>
    </ligand>
</feature>
<feature type="binding site" evidence="1">
    <location>
        <position position="119"/>
    </location>
    <ligand>
        <name>substrate</name>
    </ligand>
</feature>
<feature type="binding site" evidence="1">
    <location>
        <begin position="164"/>
        <end position="166"/>
    </location>
    <ligand>
        <name>substrate</name>
    </ligand>
</feature>
<feature type="binding site" evidence="1">
    <location>
        <begin position="186"/>
        <end position="188"/>
    </location>
    <ligand>
        <name>substrate</name>
    </ligand>
</feature>
<feature type="binding site" evidence="1">
    <location>
        <position position="213"/>
    </location>
    <ligand>
        <name>Mn(2+)</name>
        <dbReference type="ChEBI" id="CHEBI:29035"/>
        <label>2</label>
    </ligand>
</feature>
<sequence>MDQSLIQEILEIVEQAAIASATLSGKGLKDEADALAVDAMRKRMNQINMQGKIVIGEGERDEAPMLYIGEEVGTGNGPGVDFAVDPCEGTNLCAYSQRGSMAVLAASDRGGLFNAPDFYMKKLAAPPAAKGKVDIRKSATENIKILSECLGLAPDELTIVVMDRARHKDLIAEIRATGARIQPISDGDVQAAIACGFAGTGTHCLMGIGAAPEGVISAAAMRALGGHFQGQLVYDPAIAQTSEWADMTKEGNLQRLAEMGITDPDKVYEASELACGEHVVFAGSGITDGLLFNGVKFEADCTRTSSLVISNMNNTCSFTTTIHMKDGAQSIALN</sequence>
<reference key="1">
    <citation type="submission" date="2005-08" db="EMBL/GenBank/DDBJ databases">
        <title>Complete sequence of Synechococcus sp. CC9902.</title>
        <authorList>
            <person name="Copeland A."/>
            <person name="Lucas S."/>
            <person name="Lapidus A."/>
            <person name="Barry K."/>
            <person name="Detter J.C."/>
            <person name="Glavina T."/>
            <person name="Hammon N."/>
            <person name="Israni S."/>
            <person name="Pitluck S."/>
            <person name="Martinez M."/>
            <person name="Schmutz J."/>
            <person name="Larimer F."/>
            <person name="Land M."/>
            <person name="Kyrpides N."/>
            <person name="Ivanova N."/>
            <person name="Richardson P."/>
        </authorList>
    </citation>
    <scope>NUCLEOTIDE SEQUENCE [LARGE SCALE GENOMIC DNA]</scope>
    <source>
        <strain>CC9902</strain>
    </source>
</reference>
<gene>
    <name type="ordered locus">Syncc9902_1229</name>
</gene>
<keyword id="KW-0113">Calvin cycle</keyword>
<keyword id="KW-0119">Carbohydrate metabolism</keyword>
<keyword id="KW-0378">Hydrolase</keyword>
<keyword id="KW-0464">Manganese</keyword>
<keyword id="KW-0479">Metal-binding</keyword>
<keyword id="KW-1185">Reference proteome</keyword>
<dbReference type="EC" id="3.1.3.11"/>
<dbReference type="EC" id="3.1.3.37"/>
<dbReference type="EMBL" id="CP000097">
    <property type="protein sequence ID" value="ABB26193.1"/>
    <property type="molecule type" value="Genomic_DNA"/>
</dbReference>
<dbReference type="SMR" id="Q3AXK3"/>
<dbReference type="STRING" id="316279.Syncc9902_1229"/>
<dbReference type="KEGG" id="sye:Syncc9902_1229"/>
<dbReference type="eggNOG" id="COG1494">
    <property type="taxonomic scope" value="Bacteria"/>
</dbReference>
<dbReference type="HOGENOM" id="CLU_054938_0_0_3"/>
<dbReference type="OrthoDB" id="9779353at2"/>
<dbReference type="UniPathway" id="UPA00116"/>
<dbReference type="Proteomes" id="UP000002712">
    <property type="component" value="Chromosome"/>
</dbReference>
<dbReference type="GO" id="GO:0005829">
    <property type="term" value="C:cytosol"/>
    <property type="evidence" value="ECO:0007669"/>
    <property type="project" value="TreeGrafter"/>
</dbReference>
<dbReference type="GO" id="GO:0042132">
    <property type="term" value="F:fructose 1,6-bisphosphate 1-phosphatase activity"/>
    <property type="evidence" value="ECO:0007669"/>
    <property type="project" value="UniProtKB-EC"/>
</dbReference>
<dbReference type="GO" id="GO:0046872">
    <property type="term" value="F:metal ion binding"/>
    <property type="evidence" value="ECO:0007669"/>
    <property type="project" value="UniProtKB-KW"/>
</dbReference>
<dbReference type="GO" id="GO:0050278">
    <property type="term" value="F:sedoheptulose-bisphosphatase activity"/>
    <property type="evidence" value="ECO:0007669"/>
    <property type="project" value="UniProtKB-EC"/>
</dbReference>
<dbReference type="GO" id="GO:0030388">
    <property type="term" value="P:fructose 1,6-bisphosphate metabolic process"/>
    <property type="evidence" value="ECO:0007669"/>
    <property type="project" value="TreeGrafter"/>
</dbReference>
<dbReference type="GO" id="GO:0006094">
    <property type="term" value="P:gluconeogenesis"/>
    <property type="evidence" value="ECO:0007669"/>
    <property type="project" value="InterPro"/>
</dbReference>
<dbReference type="GO" id="GO:0006071">
    <property type="term" value="P:glycerol metabolic process"/>
    <property type="evidence" value="ECO:0007669"/>
    <property type="project" value="InterPro"/>
</dbReference>
<dbReference type="GO" id="GO:0019253">
    <property type="term" value="P:reductive pentose-phosphate cycle"/>
    <property type="evidence" value="ECO:0007669"/>
    <property type="project" value="UniProtKB-UniPathway"/>
</dbReference>
<dbReference type="CDD" id="cd01516">
    <property type="entry name" value="FBPase_glpX"/>
    <property type="match status" value="1"/>
</dbReference>
<dbReference type="FunFam" id="3.40.190.90:FF:000001">
    <property type="entry name" value="Fructose-1,6-bisphosphatase"/>
    <property type="match status" value="1"/>
</dbReference>
<dbReference type="Gene3D" id="3.40.190.90">
    <property type="match status" value="1"/>
</dbReference>
<dbReference type="Gene3D" id="3.30.540.10">
    <property type="entry name" value="Fructose-1,6-Bisphosphatase, subunit A, domain 1"/>
    <property type="match status" value="1"/>
</dbReference>
<dbReference type="InterPro" id="IPR004464">
    <property type="entry name" value="FBPase_class-2/SBPase"/>
</dbReference>
<dbReference type="NCBIfam" id="TIGR00330">
    <property type="entry name" value="glpX"/>
    <property type="match status" value="1"/>
</dbReference>
<dbReference type="PANTHER" id="PTHR30447:SF0">
    <property type="entry name" value="FRUCTOSE-1,6-BISPHOSPHATASE 1 CLASS 2-RELATED"/>
    <property type="match status" value="1"/>
</dbReference>
<dbReference type="PANTHER" id="PTHR30447">
    <property type="entry name" value="FRUCTOSE-1,6-BISPHOSPHATASE CLASS 2"/>
    <property type="match status" value="1"/>
</dbReference>
<dbReference type="Pfam" id="PF03320">
    <property type="entry name" value="FBPase_glpX"/>
    <property type="match status" value="1"/>
</dbReference>
<dbReference type="PIRSF" id="PIRSF004532">
    <property type="entry name" value="GlpX"/>
    <property type="match status" value="1"/>
</dbReference>
<dbReference type="SUPFAM" id="SSF56655">
    <property type="entry name" value="Carbohydrate phosphatase"/>
    <property type="match status" value="1"/>
</dbReference>
<evidence type="ECO:0000250" key="1"/>
<evidence type="ECO:0000305" key="2"/>
<comment type="function">
    <text evidence="1">Catalyzes the hydrolysis of fructose 1,6-bisphosphate (Fru 1,6-P2) and sedoheptulose 1,7-bisphosphate (Sed 1,7-P2) to fructose 6-phosphate and sedoheptulose 7-phosphate, respectively.</text>
</comment>
<comment type="catalytic activity">
    <reaction>
        <text>beta-D-fructose 1,6-bisphosphate + H2O = beta-D-fructose 6-phosphate + phosphate</text>
        <dbReference type="Rhea" id="RHEA:11064"/>
        <dbReference type="ChEBI" id="CHEBI:15377"/>
        <dbReference type="ChEBI" id="CHEBI:32966"/>
        <dbReference type="ChEBI" id="CHEBI:43474"/>
        <dbReference type="ChEBI" id="CHEBI:57634"/>
        <dbReference type="EC" id="3.1.3.11"/>
    </reaction>
</comment>
<comment type="catalytic activity">
    <reaction>
        <text>D-sedoheptulose 1,7-bisphosphate + H2O = D-sedoheptulose 7-phosphate + phosphate</text>
        <dbReference type="Rhea" id="RHEA:17461"/>
        <dbReference type="ChEBI" id="CHEBI:15377"/>
        <dbReference type="ChEBI" id="CHEBI:43474"/>
        <dbReference type="ChEBI" id="CHEBI:57483"/>
        <dbReference type="ChEBI" id="CHEBI:58335"/>
        <dbReference type="EC" id="3.1.3.37"/>
    </reaction>
</comment>
<comment type="cofactor">
    <cofactor evidence="1">
        <name>Mn(2+)</name>
        <dbReference type="ChEBI" id="CHEBI:29035"/>
    </cofactor>
</comment>
<comment type="pathway">
    <text>Carbohydrate biosynthesis; Calvin cycle.</text>
</comment>
<comment type="subunit">
    <text evidence="1">Homotetramer.</text>
</comment>
<comment type="similarity">
    <text evidence="2">Belongs to the FBPase class 2 family.</text>
</comment>
<proteinExistence type="inferred from homology"/>
<accession>Q3AXK3</accession>
<name>FBSB_SYNS9</name>
<protein>
    <recommendedName>
        <fullName>D-fructose 1,6-bisphosphatase class 2/sedoheptulose 1,7-bisphosphatase</fullName>
        <shortName>FBPase class 2/SBPase</shortName>
        <ecNumber>3.1.3.11</ecNumber>
        <ecNumber>3.1.3.37</ecNumber>
    </recommendedName>
</protein>
<organism>
    <name type="scientific">Synechococcus sp. (strain CC9902)</name>
    <dbReference type="NCBI Taxonomy" id="316279"/>
    <lineage>
        <taxon>Bacteria</taxon>
        <taxon>Bacillati</taxon>
        <taxon>Cyanobacteriota</taxon>
        <taxon>Cyanophyceae</taxon>
        <taxon>Synechococcales</taxon>
        <taxon>Synechococcaceae</taxon>
        <taxon>Synechococcus</taxon>
    </lineage>
</organism>